<sequence length="54" mass="6057">ISINQDLKAITDMLLTEQIQARQRCLAALRQRLLDLDSDVSLFNGDLLPNGRCS</sequence>
<reference key="1">
    <citation type="journal article" date="1986" name="J. Biol. Chem.">
        <title>Isolation and primary structure of the califins, three biologically active egg-laying hormone-like peptides from the atrial gland of Aplysia californica.</title>
        <authorList>
            <person name="Rothman B.S."/>
            <person name="Hawke D.H."/>
            <person name="Brown R.O."/>
            <person name="Lee T.D."/>
            <person name="Dehghan A.A."/>
            <person name="Shively J.E."/>
            <person name="Mayeri E."/>
        </authorList>
    </citation>
    <scope>PROTEIN SEQUENCE OF 1-36 AND 37-54</scope>
    <scope>IDENTIFICATION BY MASS SPECTROMETRY</scope>
    <scope>AMIDATION AT LEU-36</scope>
    <source>
        <tissue>Atrial gland</tissue>
    </source>
</reference>
<reference key="2">
    <citation type="journal article" date="1986" name="J. Biol. Chem.">
        <title>Evidence for the expression of three genes encoding homologous atrial gland peptides that cause egg laying in Aplysia.</title>
        <authorList>
            <person name="Nagle G.T."/>
            <person name="Painter S.D."/>
            <person name="Blankenship J.E."/>
            <person name="Dixon J.D."/>
            <person name="Kurosky A."/>
        </authorList>
    </citation>
    <scope>PROTEIN SEQUENCE</scope>
    <source>
        <tissue>Atrial gland</tissue>
    </source>
</reference>
<dbReference type="PIR" id="A01631">
    <property type="entry name" value="GOGABA"/>
</dbReference>
<dbReference type="SMR" id="P11924"/>
<dbReference type="Proteomes" id="UP000694888">
    <property type="component" value="Unplaced"/>
</dbReference>
<dbReference type="GO" id="GO:0005576">
    <property type="term" value="C:extracellular region"/>
    <property type="evidence" value="ECO:0007669"/>
    <property type="project" value="UniProtKB-SubCell"/>
</dbReference>
<dbReference type="GO" id="GO:0005179">
    <property type="term" value="F:hormone activity"/>
    <property type="evidence" value="ECO:0007669"/>
    <property type="project" value="UniProtKB-KW"/>
</dbReference>
<dbReference type="GO" id="GO:0007218">
    <property type="term" value="P:neuropeptide signaling pathway"/>
    <property type="evidence" value="ECO:0007669"/>
    <property type="project" value="UniProtKB-KW"/>
</dbReference>
<dbReference type="InterPro" id="IPR003424">
    <property type="entry name" value="ELH"/>
</dbReference>
<dbReference type="Pfam" id="PF02323">
    <property type="entry name" value="ELH"/>
    <property type="match status" value="1"/>
</dbReference>
<accession>P11924</accession>
<name>ELHB_APLCA</name>
<proteinExistence type="evidence at protein level"/>
<protein>
    <recommendedName>
        <fullName>Califin-B</fullName>
    </recommendedName>
    <component>
        <recommendedName>
            <fullName>Califin-B large subunit</fullName>
        </recommendedName>
    </component>
    <component>
        <recommendedName>
            <fullName>Califin-B small subunit</fullName>
        </recommendedName>
    </component>
</protein>
<evidence type="ECO:0000269" key="1">
    <source>
    </source>
</evidence>
<evidence type="ECO:0000305" key="2"/>
<keyword id="KW-0027">Amidation</keyword>
<keyword id="KW-0903">Direct protein sequencing</keyword>
<keyword id="KW-1015">Disulfide bond</keyword>
<keyword id="KW-0372">Hormone</keyword>
<keyword id="KW-0527">Neuropeptide</keyword>
<keyword id="KW-0964">Secreted</keyword>
<organism>
    <name type="scientific">Aplysia californica</name>
    <name type="common">California sea hare</name>
    <dbReference type="NCBI Taxonomy" id="6500"/>
    <lineage>
        <taxon>Eukaryota</taxon>
        <taxon>Metazoa</taxon>
        <taxon>Spiralia</taxon>
        <taxon>Lophotrochozoa</taxon>
        <taxon>Mollusca</taxon>
        <taxon>Gastropoda</taxon>
        <taxon>Heterobranchia</taxon>
        <taxon>Euthyneura</taxon>
        <taxon>Tectipleura</taxon>
        <taxon>Aplysiida</taxon>
        <taxon>Aplysioidea</taxon>
        <taxon>Aplysiidae</taxon>
        <taxon>Aplysia</taxon>
    </lineage>
</organism>
<feature type="peptide" id="PRO_0000001806" description="Califin-B large subunit" evidence="1">
    <location>
        <begin position="1"/>
        <end position="36"/>
    </location>
</feature>
<feature type="peptide" id="PRO_0000001807" description="Califin-B small subunit">
    <location>
        <begin position="37"/>
        <end position="54"/>
    </location>
</feature>
<feature type="modified residue" description="Leucine amide" evidence="1">
    <location>
        <position position="36"/>
    </location>
</feature>
<feature type="disulfide bond" description="Interchain (between large and small subunits)">
    <location>
        <begin position="25"/>
        <end position="53"/>
    </location>
</feature>
<feature type="non-consecutive residues" evidence="2">
    <location>
        <begin position="36"/>
        <end position="37"/>
    </location>
</feature>
<comment type="function">
    <text>Injected in sexually mature animals califin B excites LB and LC cells of the abdominal ganglion and cause egg-laying.</text>
</comment>
<comment type="subunit">
    <text>This protein consists of a large 36-residue subunit, bound by a single disulfide-bond to a small 18-residue subunit.</text>
</comment>
<comment type="subcellular location">
    <subcellularLocation>
        <location>Secreted</location>
    </subcellularLocation>
</comment>
<comment type="miscellaneous">
    <text>Califin B probably derives from polyprotein B, which is also the precursor for peptide B.</text>
</comment>
<comment type="similarity">
    <text evidence="2">Belongs to the molluscan ELH family.</text>
</comment>